<feature type="chain" id="PRO_0000207208" description="Leucyl/phenylalanyl-tRNA--protein transferase">
    <location>
        <begin position="1"/>
        <end position="204"/>
    </location>
</feature>
<gene>
    <name evidence="1" type="primary">aat</name>
    <name type="ordered locus">BMEI1064</name>
</gene>
<accession>P0A4S7</accession>
<accession>Q8G123</accession>
<accession>Q8YGU3</accession>
<reference key="1">
    <citation type="journal article" date="2002" name="Proc. Natl. Acad. Sci. U.S.A.">
        <title>The genome sequence of the facultative intracellular pathogen Brucella melitensis.</title>
        <authorList>
            <person name="DelVecchio V.G."/>
            <person name="Kapatral V."/>
            <person name="Redkar R.J."/>
            <person name="Patra G."/>
            <person name="Mujer C."/>
            <person name="Los T."/>
            <person name="Ivanova N."/>
            <person name="Anderson I."/>
            <person name="Bhattacharyya A."/>
            <person name="Lykidis A."/>
            <person name="Reznik G."/>
            <person name="Jablonski L."/>
            <person name="Larsen N."/>
            <person name="D'Souza M."/>
            <person name="Bernal A."/>
            <person name="Mazur M."/>
            <person name="Goltsman E."/>
            <person name="Selkov E."/>
            <person name="Elzer P.H."/>
            <person name="Hagius S."/>
            <person name="O'Callaghan D."/>
            <person name="Letesson J.-J."/>
            <person name="Haselkorn R."/>
            <person name="Kyrpides N.C."/>
            <person name="Overbeek R."/>
        </authorList>
    </citation>
    <scope>NUCLEOTIDE SEQUENCE [LARGE SCALE GENOMIC DNA]</scope>
    <source>
        <strain>ATCC 23456 / CCUG 17765 / NCTC 10094 / 16M</strain>
    </source>
</reference>
<keyword id="KW-0012">Acyltransferase</keyword>
<keyword id="KW-0963">Cytoplasm</keyword>
<keyword id="KW-0808">Transferase</keyword>
<name>LFTR_BRUME</name>
<sequence length="204" mass="23153">MTAEAPPDDDIIEPEMLLRAYATGIFPMAEEADDPEVFWVRPEKRGVIPLDGFHIPRSLQKTIRQGIFEIRLDSNFAGVIEGCASGTGERARTWINEPIRRAYAKLFEIGHCHTVEAWYEGKLAGGLYGVTLGRAFFGESMFTRKRDASKVCLAYLVQHLSRQGFVLLDTQFTTPHLERFGALEVPRKEYEEMLERALEGIARF</sequence>
<organism>
    <name type="scientific">Brucella melitensis biotype 1 (strain ATCC 23456 / CCUG 17765 / NCTC 10094 / 16M)</name>
    <dbReference type="NCBI Taxonomy" id="224914"/>
    <lineage>
        <taxon>Bacteria</taxon>
        <taxon>Pseudomonadati</taxon>
        <taxon>Pseudomonadota</taxon>
        <taxon>Alphaproteobacteria</taxon>
        <taxon>Hyphomicrobiales</taxon>
        <taxon>Brucellaceae</taxon>
        <taxon>Brucella/Ochrobactrum group</taxon>
        <taxon>Brucella</taxon>
    </lineage>
</organism>
<comment type="function">
    <text evidence="1">Functions in the N-end rule pathway of protein degradation where it conjugates Leu, Phe and, less efficiently, Met from aminoacyl-tRNAs to the N-termini of proteins containing an N-terminal arginine or lysine.</text>
</comment>
<comment type="catalytic activity">
    <reaction evidence="1">
        <text>N-terminal L-lysyl-[protein] + L-leucyl-tRNA(Leu) = N-terminal L-leucyl-L-lysyl-[protein] + tRNA(Leu) + H(+)</text>
        <dbReference type="Rhea" id="RHEA:12340"/>
        <dbReference type="Rhea" id="RHEA-COMP:9613"/>
        <dbReference type="Rhea" id="RHEA-COMP:9622"/>
        <dbReference type="Rhea" id="RHEA-COMP:12670"/>
        <dbReference type="Rhea" id="RHEA-COMP:12671"/>
        <dbReference type="ChEBI" id="CHEBI:15378"/>
        <dbReference type="ChEBI" id="CHEBI:65249"/>
        <dbReference type="ChEBI" id="CHEBI:78442"/>
        <dbReference type="ChEBI" id="CHEBI:78494"/>
        <dbReference type="ChEBI" id="CHEBI:133043"/>
        <dbReference type="EC" id="2.3.2.6"/>
    </reaction>
</comment>
<comment type="catalytic activity">
    <reaction evidence="1">
        <text>N-terminal L-arginyl-[protein] + L-leucyl-tRNA(Leu) = N-terminal L-leucyl-L-arginyl-[protein] + tRNA(Leu) + H(+)</text>
        <dbReference type="Rhea" id="RHEA:50416"/>
        <dbReference type="Rhea" id="RHEA-COMP:9613"/>
        <dbReference type="Rhea" id="RHEA-COMP:9622"/>
        <dbReference type="Rhea" id="RHEA-COMP:12672"/>
        <dbReference type="Rhea" id="RHEA-COMP:12673"/>
        <dbReference type="ChEBI" id="CHEBI:15378"/>
        <dbReference type="ChEBI" id="CHEBI:64719"/>
        <dbReference type="ChEBI" id="CHEBI:78442"/>
        <dbReference type="ChEBI" id="CHEBI:78494"/>
        <dbReference type="ChEBI" id="CHEBI:133044"/>
        <dbReference type="EC" id="2.3.2.6"/>
    </reaction>
</comment>
<comment type="catalytic activity">
    <reaction evidence="1">
        <text>L-phenylalanyl-tRNA(Phe) + an N-terminal L-alpha-aminoacyl-[protein] = an N-terminal L-phenylalanyl-L-alpha-aminoacyl-[protein] + tRNA(Phe)</text>
        <dbReference type="Rhea" id="RHEA:43632"/>
        <dbReference type="Rhea" id="RHEA-COMP:9668"/>
        <dbReference type="Rhea" id="RHEA-COMP:9699"/>
        <dbReference type="Rhea" id="RHEA-COMP:10636"/>
        <dbReference type="Rhea" id="RHEA-COMP:10637"/>
        <dbReference type="ChEBI" id="CHEBI:78442"/>
        <dbReference type="ChEBI" id="CHEBI:78531"/>
        <dbReference type="ChEBI" id="CHEBI:78597"/>
        <dbReference type="ChEBI" id="CHEBI:83561"/>
        <dbReference type="EC" id="2.3.2.6"/>
    </reaction>
</comment>
<comment type="subcellular location">
    <subcellularLocation>
        <location evidence="1">Cytoplasm</location>
    </subcellularLocation>
</comment>
<comment type="similarity">
    <text evidence="1">Belongs to the L/F-transferase family.</text>
</comment>
<protein>
    <recommendedName>
        <fullName evidence="1">Leucyl/phenylalanyl-tRNA--protein transferase</fullName>
        <ecNumber evidence="1">2.3.2.6</ecNumber>
    </recommendedName>
    <alternativeName>
        <fullName evidence="1">L/F-transferase</fullName>
    </alternativeName>
    <alternativeName>
        <fullName evidence="1">Leucyltransferase</fullName>
    </alternativeName>
    <alternativeName>
        <fullName evidence="1">Phenyalanyltransferase</fullName>
    </alternativeName>
</protein>
<proteinExistence type="inferred from homology"/>
<dbReference type="EC" id="2.3.2.6" evidence="1"/>
<dbReference type="EMBL" id="AE008917">
    <property type="protein sequence ID" value="AAL52245.1"/>
    <property type="molecule type" value="Genomic_DNA"/>
</dbReference>
<dbReference type="PIR" id="AB3385">
    <property type="entry name" value="AB3385"/>
</dbReference>
<dbReference type="SMR" id="P0A4S7"/>
<dbReference type="KEGG" id="bme:BMEI1064"/>
<dbReference type="KEGG" id="bmel:DK63_350"/>
<dbReference type="PATRIC" id="fig|224914.52.peg.363"/>
<dbReference type="eggNOG" id="COG2360">
    <property type="taxonomic scope" value="Bacteria"/>
</dbReference>
<dbReference type="Proteomes" id="UP000000419">
    <property type="component" value="Chromosome I"/>
</dbReference>
<dbReference type="GO" id="GO:0005737">
    <property type="term" value="C:cytoplasm"/>
    <property type="evidence" value="ECO:0007669"/>
    <property type="project" value="UniProtKB-SubCell"/>
</dbReference>
<dbReference type="GO" id="GO:0008914">
    <property type="term" value="F:leucyl-tRNA--protein transferase activity"/>
    <property type="evidence" value="ECO:0007669"/>
    <property type="project" value="UniProtKB-UniRule"/>
</dbReference>
<dbReference type="GO" id="GO:0030163">
    <property type="term" value="P:protein catabolic process"/>
    <property type="evidence" value="ECO:0007669"/>
    <property type="project" value="UniProtKB-UniRule"/>
</dbReference>
<dbReference type="FunFam" id="3.40.630.70:FF:000001">
    <property type="entry name" value="Leucyl/phenylalanyl-tRNA--protein transferase"/>
    <property type="match status" value="1"/>
</dbReference>
<dbReference type="Gene3D" id="3.40.630.70">
    <property type="entry name" value="Leucyl/phenylalanyl-tRNA-protein transferase, C-terminal domain"/>
    <property type="match status" value="1"/>
</dbReference>
<dbReference type="Gene3D" id="3.30.70.3550">
    <property type="entry name" value="Leucyl/phenylalanyl-tRNA-protein transferase, N-terminal domain"/>
    <property type="match status" value="1"/>
</dbReference>
<dbReference type="HAMAP" id="MF_00688">
    <property type="entry name" value="Leu_Phe_trans"/>
    <property type="match status" value="1"/>
</dbReference>
<dbReference type="InterPro" id="IPR016181">
    <property type="entry name" value="Acyl_CoA_acyltransferase"/>
</dbReference>
<dbReference type="InterPro" id="IPR004616">
    <property type="entry name" value="Leu/Phe-tRNA_Trfase"/>
</dbReference>
<dbReference type="InterPro" id="IPR042203">
    <property type="entry name" value="Leu/Phe-tRNA_Trfase_C"/>
</dbReference>
<dbReference type="InterPro" id="IPR042221">
    <property type="entry name" value="Leu/Phe-tRNA_Trfase_N"/>
</dbReference>
<dbReference type="NCBIfam" id="TIGR00667">
    <property type="entry name" value="aat"/>
    <property type="match status" value="1"/>
</dbReference>
<dbReference type="PANTHER" id="PTHR30098">
    <property type="entry name" value="LEUCYL/PHENYLALANYL-TRNA--PROTEIN TRANSFERASE"/>
    <property type="match status" value="1"/>
</dbReference>
<dbReference type="PANTHER" id="PTHR30098:SF2">
    <property type="entry name" value="LEUCYL_PHENYLALANYL-TRNA--PROTEIN TRANSFERASE"/>
    <property type="match status" value="1"/>
</dbReference>
<dbReference type="Pfam" id="PF03588">
    <property type="entry name" value="Leu_Phe_trans"/>
    <property type="match status" value="1"/>
</dbReference>
<dbReference type="SUPFAM" id="SSF55729">
    <property type="entry name" value="Acyl-CoA N-acyltransferases (Nat)"/>
    <property type="match status" value="1"/>
</dbReference>
<evidence type="ECO:0000255" key="1">
    <source>
        <dbReference type="HAMAP-Rule" id="MF_00688"/>
    </source>
</evidence>